<dbReference type="EC" id="6.3.4.3" evidence="1"/>
<dbReference type="EMBL" id="CP000394">
    <property type="protein sequence ID" value="ABI60945.1"/>
    <property type="molecule type" value="Genomic_DNA"/>
</dbReference>
<dbReference type="RefSeq" id="WP_011630755.1">
    <property type="nucleotide sequence ID" value="NC_008343.2"/>
</dbReference>
<dbReference type="SMR" id="Q0BW57"/>
<dbReference type="STRING" id="391165.GbCGDNIH1_0047"/>
<dbReference type="KEGG" id="gbe:GbCGDNIH1_0047"/>
<dbReference type="eggNOG" id="COG2759">
    <property type="taxonomic scope" value="Bacteria"/>
</dbReference>
<dbReference type="HOGENOM" id="CLU_003601_3_3_5"/>
<dbReference type="OrthoDB" id="9761733at2"/>
<dbReference type="UniPathway" id="UPA00193"/>
<dbReference type="Proteomes" id="UP000001963">
    <property type="component" value="Chromosome"/>
</dbReference>
<dbReference type="GO" id="GO:0005524">
    <property type="term" value="F:ATP binding"/>
    <property type="evidence" value="ECO:0007669"/>
    <property type="project" value="UniProtKB-UniRule"/>
</dbReference>
<dbReference type="GO" id="GO:0004329">
    <property type="term" value="F:formate-tetrahydrofolate ligase activity"/>
    <property type="evidence" value="ECO:0007669"/>
    <property type="project" value="UniProtKB-UniRule"/>
</dbReference>
<dbReference type="GO" id="GO:0035999">
    <property type="term" value="P:tetrahydrofolate interconversion"/>
    <property type="evidence" value="ECO:0007669"/>
    <property type="project" value="UniProtKB-UniRule"/>
</dbReference>
<dbReference type="CDD" id="cd00477">
    <property type="entry name" value="FTHFS"/>
    <property type="match status" value="1"/>
</dbReference>
<dbReference type="FunFam" id="3.30.1510.10:FF:000001">
    <property type="entry name" value="Formate--tetrahydrofolate ligase"/>
    <property type="match status" value="1"/>
</dbReference>
<dbReference type="FunFam" id="3.10.410.10:FF:000001">
    <property type="entry name" value="Putative formate--tetrahydrofolate ligase"/>
    <property type="match status" value="1"/>
</dbReference>
<dbReference type="Gene3D" id="3.30.1510.10">
    <property type="entry name" value="Domain 2, N(10)-formyltetrahydrofolate synthetase"/>
    <property type="match status" value="1"/>
</dbReference>
<dbReference type="Gene3D" id="3.10.410.10">
    <property type="entry name" value="Formyltetrahydrofolate synthetase, domain 3"/>
    <property type="match status" value="1"/>
</dbReference>
<dbReference type="Gene3D" id="3.40.50.300">
    <property type="entry name" value="P-loop containing nucleotide triphosphate hydrolases"/>
    <property type="match status" value="1"/>
</dbReference>
<dbReference type="HAMAP" id="MF_01543">
    <property type="entry name" value="FTHFS"/>
    <property type="match status" value="1"/>
</dbReference>
<dbReference type="InterPro" id="IPR000559">
    <property type="entry name" value="Formate_THF_ligase"/>
</dbReference>
<dbReference type="InterPro" id="IPR020628">
    <property type="entry name" value="Formate_THF_ligase_CS"/>
</dbReference>
<dbReference type="InterPro" id="IPR027417">
    <property type="entry name" value="P-loop_NTPase"/>
</dbReference>
<dbReference type="NCBIfam" id="NF010030">
    <property type="entry name" value="PRK13505.1"/>
    <property type="match status" value="1"/>
</dbReference>
<dbReference type="Pfam" id="PF01268">
    <property type="entry name" value="FTHFS"/>
    <property type="match status" value="1"/>
</dbReference>
<dbReference type="SUPFAM" id="SSF52540">
    <property type="entry name" value="P-loop containing nucleoside triphosphate hydrolases"/>
    <property type="match status" value="1"/>
</dbReference>
<dbReference type="PROSITE" id="PS00721">
    <property type="entry name" value="FTHFS_1"/>
    <property type="match status" value="1"/>
</dbReference>
<dbReference type="PROSITE" id="PS00722">
    <property type="entry name" value="FTHFS_2"/>
    <property type="match status" value="1"/>
</dbReference>
<gene>
    <name evidence="1" type="primary">fhs</name>
    <name type="ordered locus">GbCGDNIH1_0047</name>
</gene>
<keyword id="KW-0067">ATP-binding</keyword>
<keyword id="KW-0436">Ligase</keyword>
<keyword id="KW-0547">Nucleotide-binding</keyword>
<keyword id="KW-0554">One-carbon metabolism</keyword>
<keyword id="KW-1185">Reference proteome</keyword>
<name>FTHS_GRABC</name>
<organism>
    <name type="scientific">Granulibacter bethesdensis (strain ATCC BAA-1260 / CGDNIH1)</name>
    <dbReference type="NCBI Taxonomy" id="391165"/>
    <lineage>
        <taxon>Bacteria</taxon>
        <taxon>Pseudomonadati</taxon>
        <taxon>Pseudomonadota</taxon>
        <taxon>Alphaproteobacteria</taxon>
        <taxon>Acetobacterales</taxon>
        <taxon>Acetobacteraceae</taxon>
        <taxon>Granulibacter</taxon>
    </lineage>
</organism>
<protein>
    <recommendedName>
        <fullName evidence="1">Formate--tetrahydrofolate ligase</fullName>
        <ecNumber evidence="1">6.3.4.3</ecNumber>
    </recommendedName>
    <alternativeName>
        <fullName evidence="1">Formyltetrahydrofolate synthetase</fullName>
        <shortName evidence="1">FHS</shortName>
        <shortName evidence="1">FTHFS</shortName>
    </alternativeName>
</protein>
<proteinExistence type="inferred from homology"/>
<accession>Q0BW57</accession>
<feature type="chain" id="PRO_0000293036" description="Formate--tetrahydrofolate ligase">
    <location>
        <begin position="1"/>
        <end position="572"/>
    </location>
</feature>
<feature type="binding site" evidence="1">
    <location>
        <begin position="81"/>
        <end position="88"/>
    </location>
    <ligand>
        <name>ATP</name>
        <dbReference type="ChEBI" id="CHEBI:30616"/>
    </ligand>
</feature>
<reference key="1">
    <citation type="journal article" date="2007" name="J. Bacteriol.">
        <title>Genome sequence analysis of the emerging human pathogenic acetic acid bacterium Granulibacter bethesdensis.</title>
        <authorList>
            <person name="Greenberg D.E."/>
            <person name="Porcella S.F."/>
            <person name="Zelazny A.M."/>
            <person name="Virtaneva K."/>
            <person name="Sturdevant D.E."/>
            <person name="Kupko J.J. III"/>
            <person name="Barbian K.D."/>
            <person name="Babar A."/>
            <person name="Dorward D.W."/>
            <person name="Holland S.M."/>
        </authorList>
    </citation>
    <scope>NUCLEOTIDE SEQUENCE [LARGE SCALE GENOMIC DNA]</scope>
    <source>
        <strain>ATCC BAA-1260 / CGDNIH1</strain>
    </source>
</reference>
<evidence type="ECO:0000255" key="1">
    <source>
        <dbReference type="HAMAP-Rule" id="MF_01543"/>
    </source>
</evidence>
<comment type="catalytic activity">
    <reaction evidence="1">
        <text>(6S)-5,6,7,8-tetrahydrofolate + formate + ATP = (6R)-10-formyltetrahydrofolate + ADP + phosphate</text>
        <dbReference type="Rhea" id="RHEA:20221"/>
        <dbReference type="ChEBI" id="CHEBI:15740"/>
        <dbReference type="ChEBI" id="CHEBI:30616"/>
        <dbReference type="ChEBI" id="CHEBI:43474"/>
        <dbReference type="ChEBI" id="CHEBI:57453"/>
        <dbReference type="ChEBI" id="CHEBI:195366"/>
        <dbReference type="ChEBI" id="CHEBI:456216"/>
        <dbReference type="EC" id="6.3.4.3"/>
    </reaction>
</comment>
<comment type="pathway">
    <text evidence="1">One-carbon metabolism; tetrahydrofolate interconversion.</text>
</comment>
<comment type="similarity">
    <text evidence="1">Belongs to the formate--tetrahydrofolate ligase family.</text>
</comment>
<sequence length="572" mass="60606">MSTEANKPRGNQHQEAKSDAEIAQAAFMRPIVDVAAEKLGIAAEHLAPYGHYKAKIDLNYLSSLDSRPDGKLVLVTAISPTPAGEGKTTTTVGLTDALNHIGKKAVACLREPSLGPCFGVKGGAAGGGYAQVVPMEDINLHFTGDFHAIGAANNLLAALIDNHVYWGNELGIDPRRIGWRRAVDMNDRALRSIVSSLGGVSNGYPREDGFDITVASEVMAIFCLATDLDDLQRRLGNIIVGHTKDRKPIRASELSAAGSMAVLLKDAIAPNLVQTLEHNPAFIHGGPFANIAHGCNSVIATRAALKLSDYVVTEAGFGADLGAEKFFDIKCRKAGLSPSAVVIVATVRALKMHGGVAKDALKTENVEAVQKGFANLERHIQNVRKFGVPVVVGVNKFSADTDAEFQMLHDLCAKMGVPCVSSDHWANGGAGAADLAHEVVKLVEGGSADFKPLYPEDMPLWDKLRTIATEIYGASDITADAAVRKRFDELQKEGFGHLPICVAKTQYSFSTDANLRGAPSGHVIPVRDLRLSAGAEFVVAICGDIMTMPGLPKVPAANAIRLASNGTIAGLF</sequence>